<sequence>MRGALAGLSLATLATASPVLVNSIHNDAAPIISASNAKEIADNYMIKFKDHVTQNLAAEHHGWVQDLHEKTQVAKTELRKRSQSPMVDDIFNGLKHTYNIAGGLMGYAGHFDEDVIEQIRRHPDVELVERDQEVHVLGSESEVEKNAPWGLARISHRDSLSFGTFNKYLYTEDGGEGVDVYVVDTGTNVDHVDFEGRASWGKTIPQGDADEDGNGHGTHCSGTVAGKKYGVAKKAHVKAVKVLRSNGSGSMSDVVKGVEYAAESHLEQVSITKKGKRKGFKGSTANMSLGGGKSPILDKAVNAAVDAGIHFAVAAGNDNADSCNYSPAAAENAVTVGASTLADERAYFSNYGKCNDIFAPGLNIQSTWIGSKYAVNTISGTSMASPHVAGLLAYLLSLQPAKDSAFAVADISPKKLKANLISIATVGALTDVPSNTANILAWNGGGESNYSAIVEKGGYKATHRPTMLEEIESEAKVASKKVYSEGDELAHKVAELTEKVEDLIAGELKDMFRELKRE</sequence>
<keyword id="KW-0020">Allergen</keyword>
<keyword id="KW-0903">Direct protein sequencing</keyword>
<keyword id="KW-0325">Glycoprotein</keyword>
<keyword id="KW-0378">Hydrolase</keyword>
<keyword id="KW-0389">IgE-binding protein</keyword>
<keyword id="KW-0645">Protease</keyword>
<keyword id="KW-0720">Serine protease</keyword>
<keyword id="KW-0732">Signal</keyword>
<keyword id="KW-0865">Zymogen</keyword>
<name>CH901_DAVTA</name>
<accession>B7ZK61</accession>
<proteinExistence type="evidence at protein level"/>
<evidence type="ECO:0000250" key="1">
    <source>
        <dbReference type="UniProtKB" id="Q5JIZ5"/>
    </source>
</evidence>
<evidence type="ECO:0000250" key="2">
    <source>
        <dbReference type="UniProtKB" id="Q9HF04"/>
    </source>
</evidence>
<evidence type="ECO:0000250" key="3">
    <source>
        <dbReference type="UniProtKB" id="Q9Y749"/>
    </source>
</evidence>
<evidence type="ECO:0000255" key="4"/>
<evidence type="ECO:0000255" key="5">
    <source>
        <dbReference type="PROSITE-ProRule" id="PRU00498"/>
    </source>
</evidence>
<evidence type="ECO:0000255" key="6">
    <source>
        <dbReference type="PROSITE-ProRule" id="PRU01240"/>
    </source>
</evidence>
<evidence type="ECO:0000269" key="7">
    <source>
    </source>
</evidence>
<evidence type="ECO:0000303" key="8">
    <source>
    </source>
</evidence>
<evidence type="ECO:0000305" key="9"/>
<evidence type="ECO:0000305" key="10">
    <source>
    </source>
</evidence>
<evidence type="ECO:0000312" key="11">
    <source>
        <dbReference type="EMBL" id="AAX14379.1"/>
    </source>
</evidence>
<reference evidence="11" key="1">
    <citation type="journal article" date="2009" name="Mol. Immunol.">
        <title>The vacuolar serine protease, a cross-reactive allergen from Cladosporium herbarum.</title>
        <authorList>
            <person name="Poll V."/>
            <person name="Denk U."/>
            <person name="Shen H.D."/>
            <person name="Panzani R.C."/>
            <person name="Dissertori O."/>
            <person name="Lackner P."/>
            <person name="Hemmer W."/>
            <person name="Mari A."/>
            <person name="Crameri R."/>
            <person name="Lottspeich F."/>
            <person name="Rid R."/>
            <person name="Richter K."/>
            <person name="Breitenbach M."/>
            <person name="Simon-Nobbe B."/>
        </authorList>
    </citation>
    <scope>NUCLEOTIDE SEQUENCE [MRNA]</scope>
    <scope>PROTEIN SEQUENCE OF 142-148</scope>
    <scope>3D-STRUCTURE MODELING OF 146-444</scope>
    <scope>ALLERGEN</scope>
    <scope>REGION</scope>
</reference>
<protein>
    <recommendedName>
        <fullName evidence="9">Subtilisin-like serine protease Cla h 9.0101</fullName>
        <ecNumber evidence="3">3.4.21.-</ecNumber>
    </recommendedName>
    <alternativeName>
        <fullName evidence="8 11">Vacuolar serine protease</fullName>
    </alternativeName>
    <allergenName evidence="9">Cla h 9.0101</allergenName>
</protein>
<dbReference type="EC" id="3.4.21.-" evidence="3"/>
<dbReference type="EMBL" id="AY787775">
    <property type="protein sequence ID" value="AAX14379.1"/>
    <property type="molecule type" value="mRNA"/>
</dbReference>
<dbReference type="SMR" id="B7ZK61"/>
<dbReference type="Allergome" id="224">
    <property type="allergen name" value="Cla h 9"/>
</dbReference>
<dbReference type="Allergome" id="3208">
    <property type="allergen name" value="Cla h 9.0101"/>
</dbReference>
<dbReference type="GO" id="GO:0019863">
    <property type="term" value="F:IgE binding"/>
    <property type="evidence" value="ECO:0000314"/>
    <property type="project" value="UniProtKB"/>
</dbReference>
<dbReference type="GO" id="GO:0004252">
    <property type="term" value="F:serine-type endopeptidase activity"/>
    <property type="evidence" value="ECO:0000250"/>
    <property type="project" value="UniProtKB"/>
</dbReference>
<dbReference type="GO" id="GO:0006508">
    <property type="term" value="P:proteolysis"/>
    <property type="evidence" value="ECO:0000250"/>
    <property type="project" value="UniProtKB"/>
</dbReference>
<dbReference type="CDD" id="cd04077">
    <property type="entry name" value="Peptidases_S8_PCSK9_ProteinaseK_like"/>
    <property type="match status" value="1"/>
</dbReference>
<dbReference type="FunFam" id="3.30.70.80:FF:000006">
    <property type="entry name" value="Autophagic serine protease Alp2"/>
    <property type="match status" value="1"/>
</dbReference>
<dbReference type="FunFam" id="3.40.50.200:FF:000007">
    <property type="entry name" value="Subtilisin-like serine protease"/>
    <property type="match status" value="1"/>
</dbReference>
<dbReference type="Gene3D" id="3.30.70.80">
    <property type="entry name" value="Peptidase S8 propeptide/proteinase inhibitor I9"/>
    <property type="match status" value="1"/>
</dbReference>
<dbReference type="Gene3D" id="3.40.50.200">
    <property type="entry name" value="Peptidase S8/S53 domain"/>
    <property type="match status" value="1"/>
</dbReference>
<dbReference type="InterPro" id="IPR034193">
    <property type="entry name" value="PCSK9_ProteinaseK-like"/>
</dbReference>
<dbReference type="InterPro" id="IPR000209">
    <property type="entry name" value="Peptidase_S8/S53_dom"/>
</dbReference>
<dbReference type="InterPro" id="IPR036852">
    <property type="entry name" value="Peptidase_S8/S53_dom_sf"/>
</dbReference>
<dbReference type="InterPro" id="IPR022398">
    <property type="entry name" value="Peptidase_S8_His-AS"/>
</dbReference>
<dbReference type="InterPro" id="IPR023828">
    <property type="entry name" value="Peptidase_S8_Ser-AS"/>
</dbReference>
<dbReference type="InterPro" id="IPR050131">
    <property type="entry name" value="Peptidase_S8_subtilisin-like"/>
</dbReference>
<dbReference type="InterPro" id="IPR015500">
    <property type="entry name" value="Peptidase_S8_subtilisin-rel"/>
</dbReference>
<dbReference type="InterPro" id="IPR010259">
    <property type="entry name" value="S8pro/Inhibitor_I9"/>
</dbReference>
<dbReference type="InterPro" id="IPR037045">
    <property type="entry name" value="S8pro/Inhibitor_I9_sf"/>
</dbReference>
<dbReference type="PANTHER" id="PTHR43806:SF11">
    <property type="entry name" value="CEREVISIN-RELATED"/>
    <property type="match status" value="1"/>
</dbReference>
<dbReference type="PANTHER" id="PTHR43806">
    <property type="entry name" value="PEPTIDASE S8"/>
    <property type="match status" value="1"/>
</dbReference>
<dbReference type="Pfam" id="PF05922">
    <property type="entry name" value="Inhibitor_I9"/>
    <property type="match status" value="1"/>
</dbReference>
<dbReference type="Pfam" id="PF00082">
    <property type="entry name" value="Peptidase_S8"/>
    <property type="match status" value="1"/>
</dbReference>
<dbReference type="PRINTS" id="PR00723">
    <property type="entry name" value="SUBTILISIN"/>
</dbReference>
<dbReference type="SUPFAM" id="SSF52743">
    <property type="entry name" value="Subtilisin-like"/>
    <property type="match status" value="1"/>
</dbReference>
<dbReference type="PROSITE" id="PS51892">
    <property type="entry name" value="SUBTILASE"/>
    <property type="match status" value="1"/>
</dbReference>
<dbReference type="PROSITE" id="PS00137">
    <property type="entry name" value="SUBTILASE_HIS"/>
    <property type="match status" value="1"/>
</dbReference>
<dbReference type="PROSITE" id="PS00138">
    <property type="entry name" value="SUBTILASE_SER"/>
    <property type="match status" value="1"/>
</dbReference>
<organism evidence="11">
    <name type="scientific">Davidiella tassiana</name>
    <name type="common">Mycosphaerella tassiana</name>
    <name type="synonym">Cladosporium herbarum</name>
    <dbReference type="NCBI Taxonomy" id="29918"/>
    <lineage>
        <taxon>Eukaryota</taxon>
        <taxon>Fungi</taxon>
        <taxon>Dikarya</taxon>
        <taxon>Ascomycota</taxon>
        <taxon>Pezizomycotina</taxon>
        <taxon>Dothideomycetes</taxon>
        <taxon>Dothideomycetidae</taxon>
        <taxon>Cladosporiales</taxon>
        <taxon>Cladosporiaceae</taxon>
        <taxon>Cladosporium</taxon>
    </lineage>
</organism>
<comment type="function">
    <text evidence="3">Serine protease.</text>
</comment>
<comment type="allergen">
    <text evidence="7">Causes an allergic reaction in human. Binds to IgE in 15.5% of 110 patients sensitized to C.herbarum.</text>
</comment>
<comment type="similarity">
    <text evidence="4 9">Belongs to the peptidase S8 family.</text>
</comment>
<comment type="caution">
    <text evidence="10">It is uncertain whether Ser-139 or Glu-142 is the start of the chain.</text>
</comment>
<feature type="signal peptide" evidence="4">
    <location>
        <begin position="1"/>
        <end position="16"/>
    </location>
</feature>
<feature type="propeptide" id="PRO_0000446898" description="Removed in mature form" evidence="2 4">
    <location>
        <begin position="17"/>
        <end position="138"/>
    </location>
</feature>
<feature type="chain" id="PRO_5002867142" description="Subtilisin-like serine protease Cla h 9.0101" evidence="2 9">
    <location>
        <begin position="139"/>
        <end position="459"/>
    </location>
</feature>
<feature type="propeptide" id="PRO_0000446899" description="Removed in mature form" evidence="9">
    <location>
        <begin position="460"/>
        <end position="518"/>
    </location>
</feature>
<feature type="domain" description="Inhibitor I9" evidence="4">
    <location>
        <begin position="44"/>
        <end position="136"/>
    </location>
</feature>
<feature type="domain" description="Peptidase S8" evidence="6">
    <location>
        <begin position="148"/>
        <end position="454"/>
    </location>
</feature>
<feature type="region of interest" description="IgE-binding" evidence="7">
    <location>
        <begin position="244"/>
        <end position="298"/>
    </location>
</feature>
<feature type="active site" description="Charge relay system" evidence="6">
    <location>
        <position position="184"/>
    </location>
</feature>
<feature type="active site" description="Charge relay system" evidence="6">
    <location>
        <position position="216"/>
    </location>
</feature>
<feature type="active site" description="Charge relay system" evidence="6">
    <location>
        <position position="382"/>
    </location>
</feature>
<feature type="site" description="Important for catalytic activity" evidence="1">
    <location>
        <position position="317"/>
    </location>
</feature>
<feature type="glycosylation site" description="N-linked (GlcNAc...) asparagine" evidence="5">
    <location>
        <position position="246"/>
    </location>
</feature>
<feature type="glycosylation site" description="N-linked (GlcNAc...) asparagine" evidence="5">
    <location>
        <position position="286"/>
    </location>
</feature>
<feature type="glycosylation site" description="N-linked (GlcNAc...) asparagine" evidence="5">
    <location>
        <position position="449"/>
    </location>
</feature>